<protein>
    <recommendedName>
        <fullName>UPF0053 protein YegH</fullName>
    </recommendedName>
</protein>
<keyword id="KW-0129">CBS domain</keyword>
<keyword id="KW-1003">Cell membrane</keyword>
<keyword id="KW-0472">Membrane</keyword>
<keyword id="KW-1185">Reference proteome</keyword>
<keyword id="KW-0677">Repeat</keyword>
<keyword id="KW-0812">Transmembrane</keyword>
<keyword id="KW-1133">Transmembrane helix</keyword>
<feature type="chain" id="PRO_0000088356" description="UPF0053 protein YegH">
    <location>
        <begin position="1"/>
        <end position="527"/>
    </location>
</feature>
<feature type="transmembrane region" description="Helical" evidence="1">
    <location>
        <begin position="14"/>
        <end position="34"/>
    </location>
</feature>
<feature type="transmembrane region" description="Helical" evidence="1">
    <location>
        <begin position="51"/>
        <end position="71"/>
    </location>
</feature>
<feature type="transmembrane region" description="Helical" evidence="1">
    <location>
        <begin position="81"/>
        <end position="101"/>
    </location>
</feature>
<feature type="transmembrane region" description="Helical" evidence="1">
    <location>
        <begin position="122"/>
        <end position="142"/>
    </location>
</feature>
<feature type="transmembrane region" description="Helical" evidence="1">
    <location>
        <begin position="145"/>
        <end position="165"/>
    </location>
</feature>
<feature type="transmembrane region" description="Helical" evidence="1">
    <location>
        <begin position="185"/>
        <end position="205"/>
    </location>
</feature>
<feature type="transmembrane region" description="Helical" evidence="1">
    <location>
        <begin position="207"/>
        <end position="227"/>
    </location>
</feature>
<feature type="domain" description="CBS 1" evidence="2">
    <location>
        <begin position="306"/>
        <end position="366"/>
    </location>
</feature>
<feature type="domain" description="CBS 2" evidence="2">
    <location>
        <begin position="371"/>
        <end position="429"/>
    </location>
</feature>
<feature type="sequence conflict" description="In Ref. 2; AAP17492." evidence="3" ref="2">
    <original>K</original>
    <variation>E</variation>
    <location>
        <position position="269"/>
    </location>
</feature>
<name>YEGH_SHIFL</name>
<accession>Q83KI8</accession>
<dbReference type="EMBL" id="AE005674">
    <property type="protein sequence ID" value="AAN43664.2"/>
    <property type="molecule type" value="Genomic_DNA"/>
</dbReference>
<dbReference type="EMBL" id="AE014073">
    <property type="protein sequence ID" value="AAP17492.1"/>
    <property type="molecule type" value="Genomic_DNA"/>
</dbReference>
<dbReference type="RefSeq" id="NP_707957.2">
    <property type="nucleotide sequence ID" value="NC_004337.2"/>
</dbReference>
<dbReference type="RefSeq" id="WP_005049154.1">
    <property type="nucleotide sequence ID" value="NZ_WPGW01000038.1"/>
</dbReference>
<dbReference type="SMR" id="Q83KI8"/>
<dbReference type="STRING" id="198214.SF2127"/>
<dbReference type="PaxDb" id="198214-SF2127"/>
<dbReference type="GeneID" id="1025078"/>
<dbReference type="KEGG" id="sfl:SF2127"/>
<dbReference type="KEGG" id="sfx:S2251"/>
<dbReference type="PATRIC" id="fig|198214.7.peg.2537"/>
<dbReference type="HOGENOM" id="CLU_015237_2_0_6"/>
<dbReference type="Proteomes" id="UP000001006">
    <property type="component" value="Chromosome"/>
</dbReference>
<dbReference type="Proteomes" id="UP000002673">
    <property type="component" value="Chromosome"/>
</dbReference>
<dbReference type="GO" id="GO:0005886">
    <property type="term" value="C:plasma membrane"/>
    <property type="evidence" value="ECO:0007669"/>
    <property type="project" value="UniProtKB-SubCell"/>
</dbReference>
<dbReference type="GO" id="GO:0050660">
    <property type="term" value="F:flavin adenine dinucleotide binding"/>
    <property type="evidence" value="ECO:0007669"/>
    <property type="project" value="InterPro"/>
</dbReference>
<dbReference type="CDD" id="cd04590">
    <property type="entry name" value="CBS_pair_CorC_HlyC_assoc"/>
    <property type="match status" value="1"/>
</dbReference>
<dbReference type="FunFam" id="3.10.580.10:FF:000011">
    <property type="entry name" value="TerC family inner membrane protein"/>
    <property type="match status" value="1"/>
</dbReference>
<dbReference type="FunFam" id="3.30.465.10:FF:000007">
    <property type="entry name" value="TerC family inner membrane protein"/>
    <property type="match status" value="1"/>
</dbReference>
<dbReference type="Gene3D" id="3.30.465.10">
    <property type="match status" value="1"/>
</dbReference>
<dbReference type="Gene3D" id="3.10.580.10">
    <property type="entry name" value="CBS-domain"/>
    <property type="match status" value="1"/>
</dbReference>
<dbReference type="InterPro" id="IPR000644">
    <property type="entry name" value="CBS_dom"/>
</dbReference>
<dbReference type="InterPro" id="IPR046342">
    <property type="entry name" value="CBS_dom_sf"/>
</dbReference>
<dbReference type="InterPro" id="IPR036318">
    <property type="entry name" value="FAD-bd_PCMH-like_sf"/>
</dbReference>
<dbReference type="InterPro" id="IPR016169">
    <property type="entry name" value="FAD-bd_PCMH_sub2"/>
</dbReference>
<dbReference type="InterPro" id="IPR005496">
    <property type="entry name" value="Integral_membrane_TerC"/>
</dbReference>
<dbReference type="InterPro" id="IPR044751">
    <property type="entry name" value="Ion_transp-like_CBS"/>
</dbReference>
<dbReference type="InterPro" id="IPR005170">
    <property type="entry name" value="Transptr-assoc_dom"/>
</dbReference>
<dbReference type="PANTHER" id="PTHR22777">
    <property type="entry name" value="HEMOLYSIN-RELATED"/>
    <property type="match status" value="1"/>
</dbReference>
<dbReference type="PANTHER" id="PTHR22777:SF30">
    <property type="entry name" value="UPF0053 PROTEIN YEGH"/>
    <property type="match status" value="1"/>
</dbReference>
<dbReference type="Pfam" id="PF00571">
    <property type="entry name" value="CBS"/>
    <property type="match status" value="2"/>
</dbReference>
<dbReference type="Pfam" id="PF03471">
    <property type="entry name" value="CorC_HlyC"/>
    <property type="match status" value="1"/>
</dbReference>
<dbReference type="Pfam" id="PF03741">
    <property type="entry name" value="TerC"/>
    <property type="match status" value="1"/>
</dbReference>
<dbReference type="SMART" id="SM00116">
    <property type="entry name" value="CBS"/>
    <property type="match status" value="2"/>
</dbReference>
<dbReference type="SMART" id="SM01091">
    <property type="entry name" value="CorC_HlyC"/>
    <property type="match status" value="1"/>
</dbReference>
<dbReference type="SUPFAM" id="SSF54631">
    <property type="entry name" value="CBS-domain pair"/>
    <property type="match status" value="1"/>
</dbReference>
<dbReference type="SUPFAM" id="SSF56176">
    <property type="entry name" value="FAD-binding/transporter-associated domain-like"/>
    <property type="match status" value="1"/>
</dbReference>
<dbReference type="PROSITE" id="PS51371">
    <property type="entry name" value="CBS"/>
    <property type="match status" value="2"/>
</dbReference>
<reference key="1">
    <citation type="journal article" date="2002" name="Nucleic Acids Res.">
        <title>Genome sequence of Shigella flexneri 2a: insights into pathogenicity through comparison with genomes of Escherichia coli K12 and O157.</title>
        <authorList>
            <person name="Jin Q."/>
            <person name="Yuan Z."/>
            <person name="Xu J."/>
            <person name="Wang Y."/>
            <person name="Shen Y."/>
            <person name="Lu W."/>
            <person name="Wang J."/>
            <person name="Liu H."/>
            <person name="Yang J."/>
            <person name="Yang F."/>
            <person name="Zhang X."/>
            <person name="Zhang J."/>
            <person name="Yang G."/>
            <person name="Wu H."/>
            <person name="Qu D."/>
            <person name="Dong J."/>
            <person name="Sun L."/>
            <person name="Xue Y."/>
            <person name="Zhao A."/>
            <person name="Gao Y."/>
            <person name="Zhu J."/>
            <person name="Kan B."/>
            <person name="Ding K."/>
            <person name="Chen S."/>
            <person name="Cheng H."/>
            <person name="Yao Z."/>
            <person name="He B."/>
            <person name="Chen R."/>
            <person name="Ma D."/>
            <person name="Qiang B."/>
            <person name="Wen Y."/>
            <person name="Hou Y."/>
            <person name="Yu J."/>
        </authorList>
    </citation>
    <scope>NUCLEOTIDE SEQUENCE [LARGE SCALE GENOMIC DNA]</scope>
    <source>
        <strain>301 / Serotype 2a</strain>
    </source>
</reference>
<reference key="2">
    <citation type="journal article" date="2003" name="Infect. Immun.">
        <title>Complete genome sequence and comparative genomics of Shigella flexneri serotype 2a strain 2457T.</title>
        <authorList>
            <person name="Wei J."/>
            <person name="Goldberg M.B."/>
            <person name="Burland V."/>
            <person name="Venkatesan M.M."/>
            <person name="Deng W."/>
            <person name="Fournier G."/>
            <person name="Mayhew G.F."/>
            <person name="Plunkett G. III"/>
            <person name="Rose D.J."/>
            <person name="Darling A."/>
            <person name="Mau B."/>
            <person name="Perna N.T."/>
            <person name="Payne S.M."/>
            <person name="Runyen-Janecky L.J."/>
            <person name="Zhou S."/>
            <person name="Schwartz D.C."/>
            <person name="Blattner F.R."/>
        </authorList>
    </citation>
    <scope>NUCLEOTIDE SEQUENCE [LARGE SCALE GENOMIC DNA]</scope>
    <source>
        <strain>ATCC 700930 / 2457T / Serotype 2a</strain>
    </source>
</reference>
<organism>
    <name type="scientific">Shigella flexneri</name>
    <dbReference type="NCBI Taxonomy" id="623"/>
    <lineage>
        <taxon>Bacteria</taxon>
        <taxon>Pseudomonadati</taxon>
        <taxon>Pseudomonadota</taxon>
        <taxon>Gammaproteobacteria</taxon>
        <taxon>Enterobacterales</taxon>
        <taxon>Enterobacteriaceae</taxon>
        <taxon>Shigella</taxon>
    </lineage>
</organism>
<sequence>MEWIADPSIWAGLITLIVIELVLGIDNLVFIAILAEKLPPKQRDRARVTGLLLAMLMRLLLLASISWLVTLTQPLFSFRSFTFSARDLIMLFGGFFLLFKATMELNERLEGKDSNNPTQRKGAKFWGVVTQIVVLDAIFSLDSVITAVGMVDHLLVMMAAVVIAISLMLMASKPLTQFVNSHPTIVILCLSFLLMIGFSLVAEGFGFVIPKGYLYAAIGFSVMIEALNQLAIFNRRRFLSANQTLRQRTTEAVMRLLSGQKEDAELDAKTASMLVDHGNQQIFNPQERRMIERVLNLNQRTVSSIMTSRHDIEHIDLNAPEEEIRQLLERNQHTRLVVTDGDDAEDLLGVVHVIDLLQQSLRGEPLNLRVLIRQPLVFPETLPLLPALEQFRNARTHFAFVVDEFGSVEGIVTLSDVTETIAGNLPNEVEEIDARHDIQKNADGSWTANGHMPLEDLVQYVPLPLDEKREYHTIAGLLMEYLQRIPKPGEEVQVGDYLLKTLQVESHRVQKVQIIPLRKDGEMEYEV</sequence>
<evidence type="ECO:0000255" key="1"/>
<evidence type="ECO:0000255" key="2">
    <source>
        <dbReference type="PROSITE-ProRule" id="PRU00703"/>
    </source>
</evidence>
<evidence type="ECO:0000305" key="3"/>
<proteinExistence type="inferred from homology"/>
<comment type="subcellular location">
    <subcellularLocation>
        <location evidence="3">Cell membrane</location>
        <topology evidence="3">Multi-pass membrane protein</topology>
    </subcellularLocation>
</comment>
<comment type="similarity">
    <text evidence="3">Belongs to the UPF0053 family.</text>
</comment>
<gene>
    <name type="primary">yegH</name>
    <name type="ordered locus">SF2127</name>
    <name type="ordered locus">S2251</name>
</gene>